<gene>
    <name evidence="1" type="primary">atpC</name>
    <name type="ordered locus">cbdbA539</name>
</gene>
<sequence length="140" mass="15275">MAKLKLDIVTAERSVFSEEVDVVVAPGIEGEMAILPHHAPLMTALQAGELKAKIGTEEYSLVVSGGFLEVRPDRVVVLADSAERAEEIDIARAIEAKKRAEASMADKYVPGMLAAETEASLRRAMVRLKVAEKRRKHPQV</sequence>
<accession>Q3ZZT6</accession>
<comment type="function">
    <text evidence="1">Produces ATP from ADP in the presence of a proton gradient across the membrane.</text>
</comment>
<comment type="subunit">
    <text>F-type ATPases have 2 components, CF(1) - the catalytic core - and CF(0) - the membrane proton channel. CF(1) has five subunits: alpha(3), beta(3), gamma(1), delta(1), epsilon(1). CF(0) has three main subunits: a, b and c.</text>
</comment>
<comment type="subcellular location">
    <subcellularLocation>
        <location evidence="1">Cell membrane</location>
        <topology evidence="1">Peripheral membrane protein</topology>
    </subcellularLocation>
</comment>
<comment type="similarity">
    <text evidence="1">Belongs to the ATPase epsilon chain family.</text>
</comment>
<dbReference type="EMBL" id="AJ965256">
    <property type="protein sequence ID" value="CAI82727.1"/>
    <property type="molecule type" value="Genomic_DNA"/>
</dbReference>
<dbReference type="RefSeq" id="WP_011309079.1">
    <property type="nucleotide sequence ID" value="NC_007356.1"/>
</dbReference>
<dbReference type="SMR" id="Q3ZZT6"/>
<dbReference type="KEGG" id="deh:cbdbA539"/>
<dbReference type="HOGENOM" id="CLU_084338_1_3_0"/>
<dbReference type="Proteomes" id="UP000000433">
    <property type="component" value="Chromosome"/>
</dbReference>
<dbReference type="GO" id="GO:0005886">
    <property type="term" value="C:plasma membrane"/>
    <property type="evidence" value="ECO:0007669"/>
    <property type="project" value="UniProtKB-SubCell"/>
</dbReference>
<dbReference type="GO" id="GO:0045259">
    <property type="term" value="C:proton-transporting ATP synthase complex"/>
    <property type="evidence" value="ECO:0007669"/>
    <property type="project" value="UniProtKB-KW"/>
</dbReference>
<dbReference type="GO" id="GO:0005524">
    <property type="term" value="F:ATP binding"/>
    <property type="evidence" value="ECO:0007669"/>
    <property type="project" value="UniProtKB-UniRule"/>
</dbReference>
<dbReference type="GO" id="GO:0046933">
    <property type="term" value="F:proton-transporting ATP synthase activity, rotational mechanism"/>
    <property type="evidence" value="ECO:0007669"/>
    <property type="project" value="UniProtKB-UniRule"/>
</dbReference>
<dbReference type="CDD" id="cd12152">
    <property type="entry name" value="F1-ATPase_delta"/>
    <property type="match status" value="1"/>
</dbReference>
<dbReference type="FunFam" id="2.60.15.10:FF:000001">
    <property type="entry name" value="ATP synthase epsilon chain"/>
    <property type="match status" value="1"/>
</dbReference>
<dbReference type="Gene3D" id="1.20.5.440">
    <property type="entry name" value="ATP synthase delta/epsilon subunit, C-terminal domain"/>
    <property type="match status" value="1"/>
</dbReference>
<dbReference type="Gene3D" id="2.60.15.10">
    <property type="entry name" value="F0F1 ATP synthase delta/epsilon subunit, N-terminal"/>
    <property type="match status" value="1"/>
</dbReference>
<dbReference type="HAMAP" id="MF_00530">
    <property type="entry name" value="ATP_synth_epsil_bac"/>
    <property type="match status" value="1"/>
</dbReference>
<dbReference type="InterPro" id="IPR036794">
    <property type="entry name" value="ATP_F1_dsu/esu_C_sf"/>
</dbReference>
<dbReference type="InterPro" id="IPR001469">
    <property type="entry name" value="ATP_synth_F1_dsu/esu"/>
</dbReference>
<dbReference type="InterPro" id="IPR020546">
    <property type="entry name" value="ATP_synth_F1_dsu/esu_N"/>
</dbReference>
<dbReference type="InterPro" id="IPR020547">
    <property type="entry name" value="ATP_synth_F1_esu_C"/>
</dbReference>
<dbReference type="InterPro" id="IPR036771">
    <property type="entry name" value="ATPsynth_dsu/esu_N"/>
</dbReference>
<dbReference type="NCBIfam" id="TIGR01216">
    <property type="entry name" value="ATP_synt_epsi"/>
    <property type="match status" value="1"/>
</dbReference>
<dbReference type="NCBIfam" id="NF009980">
    <property type="entry name" value="PRK13446.1"/>
    <property type="match status" value="1"/>
</dbReference>
<dbReference type="PANTHER" id="PTHR13822">
    <property type="entry name" value="ATP SYNTHASE DELTA/EPSILON CHAIN"/>
    <property type="match status" value="1"/>
</dbReference>
<dbReference type="PANTHER" id="PTHR13822:SF10">
    <property type="entry name" value="ATP SYNTHASE EPSILON CHAIN, CHLOROPLASTIC"/>
    <property type="match status" value="1"/>
</dbReference>
<dbReference type="Pfam" id="PF00401">
    <property type="entry name" value="ATP-synt_DE"/>
    <property type="match status" value="1"/>
</dbReference>
<dbReference type="Pfam" id="PF02823">
    <property type="entry name" value="ATP-synt_DE_N"/>
    <property type="match status" value="1"/>
</dbReference>
<dbReference type="SUPFAM" id="SSF46604">
    <property type="entry name" value="Epsilon subunit of F1F0-ATP synthase C-terminal domain"/>
    <property type="match status" value="1"/>
</dbReference>
<dbReference type="SUPFAM" id="SSF51344">
    <property type="entry name" value="Epsilon subunit of F1F0-ATP synthase N-terminal domain"/>
    <property type="match status" value="1"/>
</dbReference>
<protein>
    <recommendedName>
        <fullName evidence="1">ATP synthase epsilon chain</fullName>
    </recommendedName>
    <alternativeName>
        <fullName evidence="1">ATP synthase F1 sector epsilon subunit</fullName>
    </alternativeName>
    <alternativeName>
        <fullName evidence="1">F-ATPase epsilon subunit</fullName>
    </alternativeName>
</protein>
<keyword id="KW-0066">ATP synthesis</keyword>
<keyword id="KW-1003">Cell membrane</keyword>
<keyword id="KW-0139">CF(1)</keyword>
<keyword id="KW-0375">Hydrogen ion transport</keyword>
<keyword id="KW-0406">Ion transport</keyword>
<keyword id="KW-0472">Membrane</keyword>
<keyword id="KW-0813">Transport</keyword>
<evidence type="ECO:0000255" key="1">
    <source>
        <dbReference type="HAMAP-Rule" id="MF_00530"/>
    </source>
</evidence>
<feature type="chain" id="PRO_0000265807" description="ATP synthase epsilon chain">
    <location>
        <begin position="1"/>
        <end position="140"/>
    </location>
</feature>
<proteinExistence type="inferred from homology"/>
<name>ATPE_DEHMC</name>
<reference key="1">
    <citation type="journal article" date="2005" name="Nat. Biotechnol.">
        <title>Genome sequence of the chlorinated compound-respiring bacterium Dehalococcoides species strain CBDB1.</title>
        <authorList>
            <person name="Kube M."/>
            <person name="Beck A."/>
            <person name="Zinder S.H."/>
            <person name="Kuhl H."/>
            <person name="Reinhardt R."/>
            <person name="Adrian L."/>
        </authorList>
    </citation>
    <scope>NUCLEOTIDE SEQUENCE [LARGE SCALE GENOMIC DNA]</scope>
    <source>
        <strain>CBDB1</strain>
    </source>
</reference>
<organism>
    <name type="scientific">Dehalococcoides mccartyi (strain CBDB1)</name>
    <dbReference type="NCBI Taxonomy" id="255470"/>
    <lineage>
        <taxon>Bacteria</taxon>
        <taxon>Bacillati</taxon>
        <taxon>Chloroflexota</taxon>
        <taxon>Dehalococcoidia</taxon>
        <taxon>Dehalococcoidales</taxon>
        <taxon>Dehalococcoidaceae</taxon>
        <taxon>Dehalococcoides</taxon>
    </lineage>
</organism>